<gene>
    <name evidence="1" type="primary">codY</name>
    <name type="ordered locus">USA300HOU_1186</name>
</gene>
<name>CODY_STAAT</name>
<evidence type="ECO:0000255" key="1">
    <source>
        <dbReference type="HAMAP-Rule" id="MF_00621"/>
    </source>
</evidence>
<comment type="function">
    <text evidence="1">DNA-binding global transcriptional regulator which is involved in the adaptive response to starvation and acts by directly or indirectly controlling the expression of numerous genes in response to nutrient availability. During rapid exponential growth, CodY is highly active and represses genes whose products allow adaptation to nutrient depletion.</text>
</comment>
<comment type="subcellular location">
    <subcellularLocation>
        <location evidence="1">Cytoplasm</location>
    </subcellularLocation>
</comment>
<comment type="similarity">
    <text evidence="1">Belongs to the CodY family.</text>
</comment>
<feature type="chain" id="PRO_1000082590" description="Global transcriptional regulator CodY">
    <location>
        <begin position="1"/>
        <end position="257"/>
    </location>
</feature>
<feature type="DNA-binding region" description="H-T-H motif" evidence="1">
    <location>
        <begin position="203"/>
        <end position="222"/>
    </location>
</feature>
<feature type="region of interest" description="GAF domain" evidence="1">
    <location>
        <begin position="1"/>
        <end position="155"/>
    </location>
</feature>
<protein>
    <recommendedName>
        <fullName evidence="1">Global transcriptional regulator CodY</fullName>
    </recommendedName>
</protein>
<dbReference type="EMBL" id="CP000730">
    <property type="protein sequence ID" value="ABX29201.1"/>
    <property type="molecule type" value="Genomic_DNA"/>
</dbReference>
<dbReference type="RefSeq" id="WP_000055337.1">
    <property type="nucleotide sequence ID" value="NC_010079.1"/>
</dbReference>
<dbReference type="SMR" id="A8Z3T5"/>
<dbReference type="KEGG" id="sax:USA300HOU_1186"/>
<dbReference type="HOGENOM" id="CLU_089581_0_0_9"/>
<dbReference type="GO" id="GO:0005737">
    <property type="term" value="C:cytoplasm"/>
    <property type="evidence" value="ECO:0007669"/>
    <property type="project" value="UniProtKB-SubCell"/>
</dbReference>
<dbReference type="GO" id="GO:0003677">
    <property type="term" value="F:DNA binding"/>
    <property type="evidence" value="ECO:0007669"/>
    <property type="project" value="UniProtKB-UniRule"/>
</dbReference>
<dbReference type="GO" id="GO:0003700">
    <property type="term" value="F:DNA-binding transcription factor activity"/>
    <property type="evidence" value="ECO:0007669"/>
    <property type="project" value="InterPro"/>
</dbReference>
<dbReference type="GO" id="GO:0005525">
    <property type="term" value="F:GTP binding"/>
    <property type="evidence" value="ECO:0007669"/>
    <property type="project" value="InterPro"/>
</dbReference>
<dbReference type="GO" id="GO:0045892">
    <property type="term" value="P:negative regulation of DNA-templated transcription"/>
    <property type="evidence" value="ECO:0007669"/>
    <property type="project" value="UniProtKB-UniRule"/>
</dbReference>
<dbReference type="FunFam" id="1.10.10.10:FF:000034">
    <property type="entry name" value="GTP-sensing transcriptional pleiotropic repressor CodY"/>
    <property type="match status" value="1"/>
</dbReference>
<dbReference type="FunFam" id="3.30.450.40:FF:000003">
    <property type="entry name" value="GTP-sensing transcriptional pleiotropic repressor CodY"/>
    <property type="match status" value="1"/>
</dbReference>
<dbReference type="Gene3D" id="3.30.450.40">
    <property type="match status" value="1"/>
</dbReference>
<dbReference type="Gene3D" id="1.10.10.10">
    <property type="entry name" value="Winged helix-like DNA-binding domain superfamily/Winged helix DNA-binding domain"/>
    <property type="match status" value="1"/>
</dbReference>
<dbReference type="HAMAP" id="MF_00621">
    <property type="entry name" value="HTH_type_CodY"/>
    <property type="match status" value="1"/>
</dbReference>
<dbReference type="InterPro" id="IPR014154">
    <property type="entry name" value="CodY"/>
</dbReference>
<dbReference type="InterPro" id="IPR029016">
    <property type="entry name" value="GAF-like_dom_sf"/>
</dbReference>
<dbReference type="InterPro" id="IPR013198">
    <property type="entry name" value="GTP_trans_reg_CodY_C"/>
</dbReference>
<dbReference type="InterPro" id="IPR010312">
    <property type="entry name" value="Transc_reg_CodY_N"/>
</dbReference>
<dbReference type="InterPro" id="IPR036388">
    <property type="entry name" value="WH-like_DNA-bd_sf"/>
</dbReference>
<dbReference type="InterPro" id="IPR036390">
    <property type="entry name" value="WH_DNA-bd_sf"/>
</dbReference>
<dbReference type="NCBIfam" id="TIGR02787">
    <property type="entry name" value="codY_Gpos"/>
    <property type="match status" value="1"/>
</dbReference>
<dbReference type="NCBIfam" id="NF003170">
    <property type="entry name" value="PRK04158.1"/>
    <property type="match status" value="1"/>
</dbReference>
<dbReference type="PANTHER" id="PTHR40062:SF1">
    <property type="entry name" value="GLOBAL TRANSCRIPTIONAL REGULATOR CODY"/>
    <property type="match status" value="1"/>
</dbReference>
<dbReference type="PANTHER" id="PTHR40062">
    <property type="entry name" value="GTP-SENSING TRANSCRIPTIONAL PLEIOTROPIC REPRESSOR CODY"/>
    <property type="match status" value="1"/>
</dbReference>
<dbReference type="Pfam" id="PF06018">
    <property type="entry name" value="CodY"/>
    <property type="match status" value="1"/>
</dbReference>
<dbReference type="Pfam" id="PF08222">
    <property type="entry name" value="HTH_CodY"/>
    <property type="match status" value="1"/>
</dbReference>
<dbReference type="PIRSF" id="PIRSF011572">
    <property type="entry name" value="GTP_sensing_CodY"/>
    <property type="match status" value="1"/>
</dbReference>
<dbReference type="SUPFAM" id="SSF46785">
    <property type="entry name" value="Winged helix' DNA-binding domain"/>
    <property type="match status" value="1"/>
</dbReference>
<organism>
    <name type="scientific">Staphylococcus aureus (strain USA300 / TCH1516)</name>
    <dbReference type="NCBI Taxonomy" id="451516"/>
    <lineage>
        <taxon>Bacteria</taxon>
        <taxon>Bacillati</taxon>
        <taxon>Bacillota</taxon>
        <taxon>Bacilli</taxon>
        <taxon>Bacillales</taxon>
        <taxon>Staphylococcaceae</taxon>
        <taxon>Staphylococcus</taxon>
    </lineage>
</organism>
<accession>A8Z3T5</accession>
<proteinExistence type="inferred from homology"/>
<keyword id="KW-0963">Cytoplasm</keyword>
<keyword id="KW-0238">DNA-binding</keyword>
<keyword id="KW-0678">Repressor</keyword>
<keyword id="KW-0804">Transcription</keyword>
<keyword id="KW-0805">Transcription regulation</keyword>
<sequence length="257" mass="28755">MSLLSKTRELNTLLQKHKGIAVDFKDVAQTISSVTVTNVFIVSRRGKILGSSLNELLKSQRIIQMLEERHIPSEYTERLMEVKQTESNIDIDNVLTVFPPENRELFIDSRTTIFPILGGGERLGTLVLGRVHDDFNENDLVLGEYAATVIGMEILREKHSEVEKEARDKAAITMAINSLSYSEKEAIEHIFEELGGTEGLLIASKVADRVGITRSVIVNALRKLESAGVIESRSLGMKGTFIKVKKEKFLDELEKSK</sequence>
<reference key="1">
    <citation type="journal article" date="2007" name="BMC Microbiol.">
        <title>Subtle genetic changes enhance virulence of methicillin resistant and sensitive Staphylococcus aureus.</title>
        <authorList>
            <person name="Highlander S.K."/>
            <person name="Hulten K.G."/>
            <person name="Qin X."/>
            <person name="Jiang H."/>
            <person name="Yerrapragada S."/>
            <person name="Mason E.O. Jr."/>
            <person name="Shang Y."/>
            <person name="Williams T.M."/>
            <person name="Fortunov R.M."/>
            <person name="Liu Y."/>
            <person name="Igboeli O."/>
            <person name="Petrosino J."/>
            <person name="Tirumalai M."/>
            <person name="Uzman A."/>
            <person name="Fox G.E."/>
            <person name="Cardenas A.M."/>
            <person name="Muzny D.M."/>
            <person name="Hemphill L."/>
            <person name="Ding Y."/>
            <person name="Dugan S."/>
            <person name="Blyth P.R."/>
            <person name="Buhay C.J."/>
            <person name="Dinh H.H."/>
            <person name="Hawes A.C."/>
            <person name="Holder M."/>
            <person name="Kovar C.L."/>
            <person name="Lee S.L."/>
            <person name="Liu W."/>
            <person name="Nazareth L.V."/>
            <person name="Wang Q."/>
            <person name="Zhou J."/>
            <person name="Kaplan S.L."/>
            <person name="Weinstock G.M."/>
        </authorList>
    </citation>
    <scope>NUCLEOTIDE SEQUENCE [LARGE SCALE GENOMIC DNA]</scope>
    <source>
        <strain>USA300 / TCH1516</strain>
    </source>
</reference>